<proteinExistence type="evidence at protein level"/>
<accession>Q9P2D7</accession>
<accession>B0I1R6</accession>
<accession>O00436</accession>
<accession>O15435</accession>
<accession>O95491</accession>
<accession>Q6ZU48</accession>
<accession>Q86YK7</accession>
<accession>Q8TEJ4</accession>
<accession>Q92863</accession>
<accession>Q9H8E6</accession>
<accession>Q9UFW6</accession>
<accession>Q9Y4Z7</accession>
<gene>
    <name evidence="16" type="primary">DNAH1</name>
    <name type="synonym">DHC7</name>
    <name type="synonym">DNAHC1</name>
    <name type="synonym">KIAA1410</name>
</gene>
<evidence type="ECO:0000250" key="1"/>
<evidence type="ECO:0000250" key="2">
    <source>
        <dbReference type="UniProtKB" id="E9Q8T7"/>
    </source>
</evidence>
<evidence type="ECO:0000250" key="3">
    <source>
        <dbReference type="UniProtKB" id="Q8TE73"/>
    </source>
</evidence>
<evidence type="ECO:0000250" key="4">
    <source>
        <dbReference type="UniProtKB" id="Q91XQ0"/>
    </source>
</evidence>
<evidence type="ECO:0000255" key="5"/>
<evidence type="ECO:0000256" key="6">
    <source>
        <dbReference type="SAM" id="MobiDB-lite"/>
    </source>
</evidence>
<evidence type="ECO:0000269" key="7">
    <source>
    </source>
</evidence>
<evidence type="ECO:0000269" key="8">
    <source>
    </source>
</evidence>
<evidence type="ECO:0000269" key="9">
    <source>
    </source>
</evidence>
<evidence type="ECO:0000269" key="10">
    <source>
    </source>
</evidence>
<evidence type="ECO:0000269" key="11">
    <source>
    </source>
</evidence>
<evidence type="ECO:0000269" key="12">
    <source>
    </source>
</evidence>
<evidence type="ECO:0000269" key="13">
    <source>
    </source>
</evidence>
<evidence type="ECO:0000303" key="14">
    <source>
    </source>
</evidence>
<evidence type="ECO:0000305" key="15"/>
<evidence type="ECO:0000312" key="16">
    <source>
        <dbReference type="HGNC" id="HGNC:2940"/>
    </source>
</evidence>
<evidence type="ECO:0007829" key="17">
    <source>
        <dbReference type="PDB" id="8I3J"/>
    </source>
</evidence>
<feature type="chain" id="PRO_0000318936" description="Dynein axonemal heavy chain 1">
    <location>
        <begin position="1"/>
        <end position="4265"/>
    </location>
</feature>
<feature type="region of interest" description="Stem" evidence="1">
    <location>
        <begin position="1"/>
        <end position="1542"/>
    </location>
</feature>
<feature type="region of interest" description="Disordered" evidence="6">
    <location>
        <begin position="1"/>
        <end position="88"/>
    </location>
</feature>
<feature type="region of interest" description="AAA 1" evidence="1">
    <location>
        <begin position="1543"/>
        <end position="1764"/>
    </location>
</feature>
<feature type="region of interest" description="AAA 2" evidence="1">
    <location>
        <begin position="1824"/>
        <end position="2057"/>
    </location>
</feature>
<feature type="region of interest" description="AAA 3" evidence="1">
    <location>
        <begin position="2189"/>
        <end position="2449"/>
    </location>
</feature>
<feature type="region of interest" description="AAA 4" evidence="1">
    <location>
        <begin position="2547"/>
        <end position="2799"/>
    </location>
</feature>
<feature type="region of interest" description="Stalk" evidence="1">
    <location>
        <begin position="2814"/>
        <end position="3112"/>
    </location>
</feature>
<feature type="region of interest" description="AAA 5" evidence="1">
    <location>
        <begin position="3197"/>
        <end position="3427"/>
    </location>
</feature>
<feature type="region of interest" description="AAA 6" evidence="1">
    <location>
        <begin position="3640"/>
        <end position="3859"/>
    </location>
</feature>
<feature type="coiled-coil region" evidence="5">
    <location>
        <begin position="3074"/>
        <end position="3122"/>
    </location>
</feature>
<feature type="short sequence motif" description="GPAGTGKT motif">
    <location>
        <begin position="1581"/>
        <end position="1588"/>
    </location>
</feature>
<feature type="short sequence motif" description="CFDEFNR motif">
    <location>
        <begin position="1631"/>
        <end position="1637"/>
    </location>
</feature>
<feature type="compositionally biased region" description="Pro residues" evidence="6">
    <location>
        <begin position="60"/>
        <end position="69"/>
    </location>
</feature>
<feature type="binding site" evidence="5">
    <location>
        <begin position="1581"/>
        <end position="1588"/>
    </location>
    <ligand>
        <name>ATP</name>
        <dbReference type="ChEBI" id="CHEBI:30616"/>
    </ligand>
</feature>
<feature type="binding site" evidence="5">
    <location>
        <begin position="1862"/>
        <end position="1869"/>
    </location>
    <ligand>
        <name>ATP</name>
        <dbReference type="ChEBI" id="CHEBI:30616"/>
    </ligand>
</feature>
<feature type="binding site" evidence="5">
    <location>
        <begin position="2227"/>
        <end position="2234"/>
    </location>
    <ligand>
        <name>ATP</name>
        <dbReference type="ChEBI" id="CHEBI:30616"/>
    </ligand>
</feature>
<feature type="binding site" evidence="5">
    <location>
        <begin position="2586"/>
        <end position="2593"/>
    </location>
    <ligand>
        <name>ATP</name>
        <dbReference type="ChEBI" id="CHEBI:30616"/>
    </ligand>
</feature>
<feature type="splice variant" id="VSP_031305" description="In isoform 3." evidence="14">
    <original>ALDKMEKEWSTILFNVLPYKATDTYILKSPDEASQLLDDHIVMTQ</original>
    <variation>VGSHQRAQPLQPGPAGQPDLLLWQPQPLGRMTVISPIPGVMRPRG</variation>
    <location>
        <begin position="1161"/>
        <end position="1205"/>
    </location>
</feature>
<feature type="splice variant" id="VSP_031306" description="In isoform 3." evidence="14">
    <location>
        <begin position="1206"/>
        <end position="4265"/>
    </location>
</feature>
<feature type="splice variant" id="VSP_059797" description="In isoform 6.">
    <original>LINGLSDEKVRWQETVENLQYMLNNISGDVLVAAGFVAYLGPFT</original>
    <variation>VRTLLLQGLQAGPAQTGARKDQGAGGSWGGCPHPLPGNPRCHSG</variation>
    <location>
        <begin position="3122"/>
        <end position="3165"/>
    </location>
</feature>
<feature type="splice variant" id="VSP_059798" description="In isoform 6.">
    <location>
        <begin position="3166"/>
        <end position="4265"/>
    </location>
</feature>
<feature type="splice variant" id="VSP_059799" description="In isoform 7.">
    <original>MFEAPSELTQRPQVGCYIHGLFLEGARWDPEAFQLAESQPKELYTEMA</original>
    <variation>PAGIQRPSSWLSLSPRSCTQRWPLSGSCQHPTARPRTRTFTCAPSTRH</variation>
    <location>
        <begin position="4149"/>
        <end position="4196"/>
    </location>
</feature>
<feature type="splice variant" id="VSP_059800" description="In isoform 7.">
    <location>
        <begin position="4197"/>
        <end position="4265"/>
    </location>
</feature>
<feature type="sequence variant" id="VAR_038912" description="In dbSNP:rs10460963.">
    <original>E</original>
    <variation>D</variation>
    <location>
        <position position="205"/>
    </location>
</feature>
<feature type="sequence variant" id="VAR_038913" description="In dbSNP:rs13060192.">
    <original>V</original>
    <variation>L</variation>
    <location>
        <position position="441"/>
    </location>
</feature>
<feature type="sequence variant" id="VAR_080888" description="In SPGF18." evidence="11">
    <location>
        <begin position="870"/>
        <end position="4265"/>
    </location>
</feature>
<feature type="sequence variant" id="VAR_080889" description="In SPGF18." evidence="11">
    <location>
        <begin position="1036"/>
        <end position="4265"/>
    </location>
</feature>
<feature type="sequence variant" id="VAR_079510" description="In CILD37; dbSNP:rs544674332." evidence="9">
    <original>K</original>
    <variation>Q</variation>
    <location>
        <position position="1154"/>
    </location>
</feature>
<feature type="sequence variant" id="VAR_079511" description="In SPGF18; dbSNP:rs1131692251." evidence="10">
    <original>V</original>
    <variation>G</variation>
    <location>
        <position position="1287"/>
    </location>
</feature>
<feature type="sequence variant" id="VAR_079512" description="In SPGF18; dbSNP:rs140883175." evidence="8">
    <original>D</original>
    <variation>N</variation>
    <location>
        <position position="1293"/>
    </location>
</feature>
<feature type="sequence variant" id="VAR_080890" description="In SPGF18; uncertain significance; dbSNP:rs374644342." evidence="11">
    <original>T</original>
    <variation>M</variation>
    <location>
        <position position="1372"/>
    </location>
</feature>
<feature type="sequence variant" id="VAR_038914" description="In dbSNP:rs17052095.">
    <original>V</original>
    <variation>M</variation>
    <location>
        <position position="1502"/>
    </location>
</feature>
<feature type="sequence variant" id="VAR_080891" description="In SPGF18; uncertain significance." evidence="12">
    <location>
        <begin position="1582"/>
        <end position="1584"/>
    </location>
</feature>
<feature type="sequence variant" id="VAR_038915" description="In dbSNP:rs17052097.">
    <original>R</original>
    <variation>C</variation>
    <location>
        <position position="1663"/>
    </location>
</feature>
<feature type="sequence variant" id="VAR_080892" description="In SPGF18." evidence="11">
    <location>
        <begin position="1702"/>
        <end position="4265"/>
    </location>
</feature>
<feature type="sequence variant" id="VAR_080893" description="In SPGF18." evidence="11">
    <location>
        <begin position="1955"/>
        <end position="4265"/>
    </location>
</feature>
<feature type="sequence variant" id="VAR_080894" description="In SPGF18; uncertain significance; dbSNP:rs757396103." evidence="11">
    <original>L</original>
    <variation>R</variation>
    <location>
        <position position="2071"/>
    </location>
</feature>
<feature type="sequence variant" id="VAR_080895" description="In SPGF18; uncertain significance; dbSNP:rs778635747." evidence="11">
    <original>V</original>
    <variation>M</variation>
    <location>
        <position position="2150"/>
    </location>
</feature>
<feature type="sequence variant" id="VAR_062176" description="In dbSNP:rs56002041.">
    <original>N</original>
    <variation>S</variation>
    <location>
        <position position="2384"/>
    </location>
</feature>
<feature type="sequence variant" id="VAR_080896" description="In SPGF18." evidence="11">
    <location>
        <begin position="2466"/>
        <end position="4265"/>
    </location>
</feature>
<feature type="sequence variant" id="VAR_080897" description="In SPGF18." evidence="11">
    <location>
        <begin position="2622"/>
        <end position="4265"/>
    </location>
</feature>
<feature type="sequence variant" id="VAR_080898" description="In SPGF18; uncertain significance; dbSNP:rs1704350281." evidence="11">
    <original>R</original>
    <variation>C</variation>
    <location>
        <position position="3229"/>
    </location>
</feature>
<feature type="sequence variant" id="VAR_080899" description="In SPGF18." evidence="11">
    <location>
        <begin position="3738"/>
        <end position="4065"/>
    </location>
</feature>
<feature type="sequence variant" id="VAR_064924" description="In dbSNP:rs365048.">
    <original>R</original>
    <variation>H</variation>
    <location>
        <position position="3832"/>
    </location>
</feature>
<feature type="sequence variant" id="VAR_080900" description="In SPGF18; uncertain significance; dbSNP:rs748247721." evidence="11">
    <original>R</original>
    <variation>L</variation>
    <location>
        <position position="4096"/>
    </location>
</feature>
<feature type="sequence variant" id="VAR_080901" description="In SPGF18; uncertain significance; dbSNP:rs776800142." evidence="11">
    <original>R</original>
    <variation>C</variation>
    <location>
        <position position="4133"/>
    </location>
</feature>
<feature type="sequence variant" id="VAR_080902" description="In SPGF18; uncertain significance; dbSNP:rs765046623." evidence="11">
    <original>A</original>
    <variation>T</variation>
    <location>
        <position position="4174"/>
    </location>
</feature>
<feature type="sequence conflict" description="In Ref. 5; CAA10556." evidence="15" ref="5">
    <original>Y</original>
    <variation>F</variation>
    <location>
        <position position="1545"/>
    </location>
</feature>
<feature type="sequence conflict" description="In Ref. 7; CAB06058." evidence="15" ref="7">
    <original>Q</original>
    <variation>L</variation>
    <location>
        <position position="1610"/>
    </location>
</feature>
<feature type="sequence conflict" description="In Ref. 6; AAC50702." evidence="15" ref="6">
    <original>A</original>
    <variation>G</variation>
    <location>
        <position position="1630"/>
    </location>
</feature>
<feature type="sequence conflict" description="In Ref. 8; AAB82761." evidence="15" ref="8">
    <original>A</original>
    <variation>S</variation>
    <location>
        <position position="1647"/>
    </location>
</feature>
<feature type="sequence conflict" description="In Ref. 7; CAB06058." evidence="15" ref="7">
    <original>C</original>
    <variation>Y</variation>
    <location>
        <position position="1677"/>
    </location>
</feature>
<feature type="sequence conflict" description="In Ref. 8; AAB82761." evidence="15" ref="8">
    <original>I</original>
    <variation>T</variation>
    <location>
        <position position="1681"/>
    </location>
</feature>
<feature type="sequence conflict" description="In Ref. 2; BAB14671." evidence="15" ref="2">
    <original>S</original>
    <variation>G</variation>
    <location>
        <position position="3259"/>
    </location>
</feature>
<feature type="sequence conflict" description="In Ref. 2; BAB14671." evidence="15" ref="2">
    <original>N</original>
    <variation>S</variation>
    <location>
        <position position="3304"/>
    </location>
</feature>
<feature type="sequence conflict" description="In Ref. 2; BAB14671." evidence="15" ref="2">
    <original>A</original>
    <variation>V</variation>
    <location>
        <position position="3486"/>
    </location>
</feature>
<feature type="sequence conflict" description="In Ref. 2; BAB14671." evidence="15" ref="2">
    <original>E</original>
    <variation>V</variation>
    <location>
        <position position="3489"/>
    </location>
</feature>
<feature type="sequence conflict" description="In Ref. 2; BAB14671." evidence="15" ref="2">
    <original>P</original>
    <variation>L</variation>
    <location>
        <position position="3610"/>
    </location>
</feature>
<feature type="helix" evidence="17">
    <location>
        <begin position="2845"/>
        <end position="2913"/>
    </location>
</feature>
<feature type="turn" evidence="17">
    <location>
        <begin position="2914"/>
        <end position="2916"/>
    </location>
</feature>
<feature type="helix" evidence="17">
    <location>
        <begin position="2917"/>
        <end position="2928"/>
    </location>
</feature>
<feature type="helix" evidence="17">
    <location>
        <begin position="2932"/>
        <end position="2940"/>
    </location>
</feature>
<feature type="helix" evidence="17">
    <location>
        <begin position="2946"/>
        <end position="2958"/>
    </location>
</feature>
<feature type="strand" evidence="17">
    <location>
        <begin position="2969"/>
        <end position="2972"/>
    </location>
</feature>
<feature type="helix" evidence="17">
    <location>
        <begin position="2979"/>
        <end position="2985"/>
    </location>
</feature>
<feature type="helix" evidence="17">
    <location>
        <begin position="2989"/>
        <end position="2997"/>
    </location>
</feature>
<feature type="helix" evidence="17">
    <location>
        <begin position="3006"/>
        <end position="3011"/>
    </location>
</feature>
<feature type="helix" evidence="17">
    <location>
        <begin position="3013"/>
        <end position="3016"/>
    </location>
</feature>
<feature type="helix" evidence="17">
    <location>
        <begin position="3023"/>
        <end position="3029"/>
    </location>
</feature>
<feature type="helix" evidence="17">
    <location>
        <begin position="3032"/>
        <end position="3052"/>
    </location>
</feature>
<feature type="helix" evidence="17">
    <location>
        <begin position="3054"/>
        <end position="3114"/>
    </location>
</feature>
<feature type="turn" evidence="17">
    <location>
        <begin position="3115"/>
        <end position="3118"/>
    </location>
</feature>
<reference key="1">
    <citation type="journal article" date="2000" name="DNA Res.">
        <title>Prediction of the coding sequences of unidentified human genes. XVI. The complete sequences of 150 new cDNA clones from brain which code for large proteins in vitro.</title>
        <authorList>
            <person name="Nagase T."/>
            <person name="Kikuno R."/>
            <person name="Ishikawa K."/>
            <person name="Hirosawa M."/>
            <person name="Ohara O."/>
        </authorList>
    </citation>
    <scope>NUCLEOTIDE SEQUENCE [LARGE SCALE MRNA] (ISOFORM 4)</scope>
    <source>
        <tissue>Brain</tissue>
    </source>
</reference>
<reference key="2">
    <citation type="journal article" date="2004" name="Nat. Genet.">
        <title>Complete sequencing and characterization of 21,243 full-length human cDNAs.</title>
        <authorList>
            <person name="Ota T."/>
            <person name="Suzuki Y."/>
            <person name="Nishikawa T."/>
            <person name="Otsuki T."/>
            <person name="Sugiyama T."/>
            <person name="Irie R."/>
            <person name="Wakamatsu A."/>
            <person name="Hayashi K."/>
            <person name="Sato H."/>
            <person name="Nagai K."/>
            <person name="Kimura K."/>
            <person name="Makita H."/>
            <person name="Sekine M."/>
            <person name="Obayashi M."/>
            <person name="Nishi T."/>
            <person name="Shibahara T."/>
            <person name="Tanaka T."/>
            <person name="Ishii S."/>
            <person name="Yamamoto J."/>
            <person name="Saito K."/>
            <person name="Kawai Y."/>
            <person name="Isono Y."/>
            <person name="Nakamura Y."/>
            <person name="Nagahari K."/>
            <person name="Murakami K."/>
            <person name="Yasuda T."/>
            <person name="Iwayanagi T."/>
            <person name="Wagatsuma M."/>
            <person name="Shiratori A."/>
            <person name="Sudo H."/>
            <person name="Hosoiri T."/>
            <person name="Kaku Y."/>
            <person name="Kodaira H."/>
            <person name="Kondo H."/>
            <person name="Sugawara M."/>
            <person name="Takahashi M."/>
            <person name="Kanda K."/>
            <person name="Yokoi T."/>
            <person name="Furuya T."/>
            <person name="Kikkawa E."/>
            <person name="Omura Y."/>
            <person name="Abe K."/>
            <person name="Kamihara K."/>
            <person name="Katsuta N."/>
            <person name="Sato K."/>
            <person name="Tanikawa M."/>
            <person name="Yamazaki M."/>
            <person name="Ninomiya K."/>
            <person name="Ishibashi T."/>
            <person name="Yamashita H."/>
            <person name="Murakawa K."/>
            <person name="Fujimori K."/>
            <person name="Tanai H."/>
            <person name="Kimata M."/>
            <person name="Watanabe M."/>
            <person name="Hiraoka S."/>
            <person name="Chiba Y."/>
            <person name="Ishida S."/>
            <person name="Ono Y."/>
            <person name="Takiguchi S."/>
            <person name="Watanabe S."/>
            <person name="Yosida M."/>
            <person name="Hotuta T."/>
            <person name="Kusano J."/>
            <person name="Kanehori K."/>
            <person name="Takahashi-Fujii A."/>
            <person name="Hara H."/>
            <person name="Tanase T.-O."/>
            <person name="Nomura Y."/>
            <person name="Togiya S."/>
            <person name="Komai F."/>
            <person name="Hara R."/>
            <person name="Takeuchi K."/>
            <person name="Arita M."/>
            <person name="Imose N."/>
            <person name="Musashino K."/>
            <person name="Yuuki H."/>
            <person name="Oshima A."/>
            <person name="Sasaki N."/>
            <person name="Aotsuka S."/>
            <person name="Yoshikawa Y."/>
            <person name="Matsunawa H."/>
            <person name="Ichihara T."/>
            <person name="Shiohata N."/>
            <person name="Sano S."/>
            <person name="Moriya S."/>
            <person name="Momiyama H."/>
            <person name="Satoh N."/>
            <person name="Takami S."/>
            <person name="Terashima Y."/>
            <person name="Suzuki O."/>
            <person name="Nakagawa S."/>
            <person name="Senoh A."/>
            <person name="Mizoguchi H."/>
            <person name="Goto Y."/>
            <person name="Shimizu F."/>
            <person name="Wakebe H."/>
            <person name="Hishigaki H."/>
            <person name="Watanabe T."/>
            <person name="Sugiyama A."/>
            <person name="Takemoto M."/>
            <person name="Kawakami B."/>
            <person name="Yamazaki M."/>
            <person name="Watanabe K."/>
            <person name="Kumagai A."/>
            <person name="Itakura S."/>
            <person name="Fukuzumi Y."/>
            <person name="Fujimori Y."/>
            <person name="Komiyama M."/>
            <person name="Tashiro H."/>
            <person name="Tanigami A."/>
            <person name="Fujiwara T."/>
            <person name="Ono T."/>
            <person name="Yamada K."/>
            <person name="Fujii Y."/>
            <person name="Ozaki K."/>
            <person name="Hirao M."/>
            <person name="Ohmori Y."/>
            <person name="Kawabata A."/>
            <person name="Hikiji T."/>
            <person name="Kobatake N."/>
            <person name="Inagaki H."/>
            <person name="Ikema Y."/>
            <person name="Okamoto S."/>
            <person name="Okitani R."/>
            <person name="Kawakami T."/>
            <person name="Noguchi S."/>
            <person name="Itoh T."/>
            <person name="Shigeta K."/>
            <person name="Senba T."/>
            <person name="Matsumura K."/>
            <person name="Nakajima Y."/>
            <person name="Mizuno T."/>
            <person name="Morinaga M."/>
            <person name="Sasaki M."/>
            <person name="Togashi T."/>
            <person name="Oyama M."/>
            <person name="Hata H."/>
            <person name="Watanabe M."/>
            <person name="Komatsu T."/>
            <person name="Mizushima-Sugano J."/>
            <person name="Satoh T."/>
            <person name="Shirai Y."/>
            <person name="Takahashi Y."/>
            <person name="Nakagawa K."/>
            <person name="Okumura K."/>
            <person name="Nagase T."/>
            <person name="Nomura N."/>
            <person name="Kikuchi H."/>
            <person name="Masuho Y."/>
            <person name="Yamashita R."/>
            <person name="Nakai K."/>
            <person name="Yada T."/>
            <person name="Nakamura Y."/>
            <person name="Ohara O."/>
            <person name="Isogai T."/>
            <person name="Sugano S."/>
        </authorList>
    </citation>
    <scope>NUCLEOTIDE SEQUENCE [LARGE SCALE MRNA] (ISOFORM 3)</scope>
    <scope>NUCLEOTIDE SEQUENCE [LARGE SCALE MRNA] OF 3095-4265 (ISOFORM 7)</scope>
    <scope>NUCLEOTIDE SEQUENCE [LARGE SCALE MRNA] OF 3244-4265 (ISOFORM 4)</scope>
    <source>
        <tissue>Placenta</tissue>
        <tissue>Testis</tissue>
    </source>
</reference>
<reference key="3">
    <citation type="submission" date="2007-01" db="EMBL/GenBank/DDBJ databases">
        <title>Multiplex amplification and cloning of 5'-ends of cDNA by ligase-free recombination: preparation of full-length cDNA clones encoding motor proteins.</title>
        <authorList>
            <person name="Yamakawa H."/>
            <person name="Kikuno R.F."/>
            <person name="Nagase T."/>
            <person name="Ohara O."/>
        </authorList>
    </citation>
    <scope>NUCLEOTIDE SEQUENCE [LARGE SCALE MRNA] (ISOFORM 6)</scope>
    <source>
        <tissue>Brain</tissue>
    </source>
</reference>
<reference key="4">
    <citation type="journal article" date="2006" name="Nature">
        <title>The DNA sequence, annotation and analysis of human chromosome 3.</title>
        <authorList>
            <person name="Muzny D.M."/>
            <person name="Scherer S.E."/>
            <person name="Kaul R."/>
            <person name="Wang J."/>
            <person name="Yu J."/>
            <person name="Sudbrak R."/>
            <person name="Buhay C.J."/>
            <person name="Chen R."/>
            <person name="Cree A."/>
            <person name="Ding Y."/>
            <person name="Dugan-Rocha S."/>
            <person name="Gill R."/>
            <person name="Gunaratne P."/>
            <person name="Harris R.A."/>
            <person name="Hawes A.C."/>
            <person name="Hernandez J."/>
            <person name="Hodgson A.V."/>
            <person name="Hume J."/>
            <person name="Jackson A."/>
            <person name="Khan Z.M."/>
            <person name="Kovar-Smith C."/>
            <person name="Lewis L.R."/>
            <person name="Lozado R.J."/>
            <person name="Metzker M.L."/>
            <person name="Milosavljevic A."/>
            <person name="Miner G.R."/>
            <person name="Morgan M.B."/>
            <person name="Nazareth L.V."/>
            <person name="Scott G."/>
            <person name="Sodergren E."/>
            <person name="Song X.-Z."/>
            <person name="Steffen D."/>
            <person name="Wei S."/>
            <person name="Wheeler D.A."/>
            <person name="Wright M.W."/>
            <person name="Worley K.C."/>
            <person name="Yuan Y."/>
            <person name="Zhang Z."/>
            <person name="Adams C.Q."/>
            <person name="Ansari-Lari M.A."/>
            <person name="Ayele M."/>
            <person name="Brown M.J."/>
            <person name="Chen G."/>
            <person name="Chen Z."/>
            <person name="Clendenning J."/>
            <person name="Clerc-Blankenburg K.P."/>
            <person name="Chen R."/>
            <person name="Chen Z."/>
            <person name="Davis C."/>
            <person name="Delgado O."/>
            <person name="Dinh H.H."/>
            <person name="Dong W."/>
            <person name="Draper H."/>
            <person name="Ernst S."/>
            <person name="Fu G."/>
            <person name="Gonzalez-Garay M.L."/>
            <person name="Garcia D.K."/>
            <person name="Gillett W."/>
            <person name="Gu J."/>
            <person name="Hao B."/>
            <person name="Haugen E."/>
            <person name="Havlak P."/>
            <person name="He X."/>
            <person name="Hennig S."/>
            <person name="Hu S."/>
            <person name="Huang W."/>
            <person name="Jackson L.R."/>
            <person name="Jacob L.S."/>
            <person name="Kelly S.H."/>
            <person name="Kube M."/>
            <person name="Levy R."/>
            <person name="Li Z."/>
            <person name="Liu B."/>
            <person name="Liu J."/>
            <person name="Liu W."/>
            <person name="Lu J."/>
            <person name="Maheshwari M."/>
            <person name="Nguyen B.-V."/>
            <person name="Okwuonu G.O."/>
            <person name="Palmeiri A."/>
            <person name="Pasternak S."/>
            <person name="Perez L.M."/>
            <person name="Phelps K.A."/>
            <person name="Plopper F.J."/>
            <person name="Qiang B."/>
            <person name="Raymond C."/>
            <person name="Rodriguez R."/>
            <person name="Saenphimmachak C."/>
            <person name="Santibanez J."/>
            <person name="Shen H."/>
            <person name="Shen Y."/>
            <person name="Subramanian S."/>
            <person name="Tabor P.E."/>
            <person name="Verduzco D."/>
            <person name="Waldron L."/>
            <person name="Wang J."/>
            <person name="Wang J."/>
            <person name="Wang Q."/>
            <person name="Williams G.A."/>
            <person name="Wong G.K.-S."/>
            <person name="Yao Z."/>
            <person name="Zhang J."/>
            <person name="Zhang X."/>
            <person name="Zhao G."/>
            <person name="Zhou J."/>
            <person name="Zhou Y."/>
            <person name="Nelson D."/>
            <person name="Lehrach H."/>
            <person name="Reinhardt R."/>
            <person name="Naylor S.L."/>
            <person name="Yang H."/>
            <person name="Olson M."/>
            <person name="Weinstock G."/>
            <person name="Gibbs R.A."/>
        </authorList>
    </citation>
    <scope>NUCLEOTIDE SEQUENCE [LARGE SCALE GENOMIC DNA]</scope>
</reference>
<reference key="5">
    <citation type="journal article" date="2000" name="Eur. J. Hum. Genet.">
        <title>Identification, tissue specific expression, and chromosomal localisation of several human dynein heavy chain genes.</title>
        <authorList>
            <person name="Maiti A.K."/>
            <person name="Mattei M.-G."/>
            <person name="Jorissen M."/>
            <person name="Volz A."/>
            <person name="Zeigler A."/>
            <person name="Bouvagnet P."/>
        </authorList>
    </citation>
    <scope>NUCLEOTIDE SEQUENCE [MRNA] OF 1543-1685 (ISOFORMS 4/6/7)</scope>
    <scope>NUCLEOTIDE SEQUENCE [GENOMIC DNA] OF 1588-1670 (ISOFORMS 4/6/7)</scope>
    <scope>TISSUE SPECIFICITY</scope>
    <source>
        <tissue>Nasal polyp</tissue>
    </source>
</reference>
<reference key="6">
    <citation type="journal article" date="1996" name="Genomics">
        <title>Multiple mouse chromosomal loci for dynein-based motility.</title>
        <authorList>
            <person name="Vaughan K.T."/>
            <person name="Mikami A."/>
            <person name="Paschal B.M."/>
            <person name="Holzbaur E.L.F."/>
            <person name="Hughes S.M."/>
            <person name="Echeverri C.J."/>
            <person name="Moore K.J."/>
            <person name="Gilbert D.J."/>
            <person name="Copeland N.G."/>
            <person name="Jenkins N.A."/>
            <person name="Vallee R.B."/>
        </authorList>
    </citation>
    <scope>NUCLEOTIDE SEQUENCE [MRNA] OF 1582-1636 (ISOFORMS 4/6/7)</scope>
    <source>
        <tissue>Lung</tissue>
    </source>
</reference>
<reference key="7">
    <citation type="journal article" date="1997" name="Gene">
        <title>Identification of dynein heavy chain genes expressed in human and mouse testis: chromosomal localization of an axonemal dynein gene.</title>
        <authorList>
            <person name="Neesen J."/>
            <person name="Koehler M.R."/>
            <person name="Kirschner R."/>
            <person name="Steinlein C."/>
            <person name="Kreutzberger J."/>
            <person name="Engel W."/>
            <person name="Schmid M."/>
        </authorList>
    </citation>
    <scope>NUCLEOTIDE SEQUENCE [MRNA] OF 1592-1686 (ISOFORMS 4/6/7)</scope>
    <source>
        <tissue>Testis</tissue>
    </source>
</reference>
<reference key="8">
    <citation type="journal article" date="1997" name="FEBS Lett.">
        <title>Isolation of several human axonemal dynein heavy chain genes: genomic structure of the catalytic site, phylogenetic analysis and chromosomal assignment.</title>
        <authorList>
            <person name="Chapelin C."/>
            <person name="Duriez B."/>
            <person name="Magnino F."/>
            <person name="Goossens M."/>
            <person name="Escudier E."/>
            <person name="Amselem S."/>
        </authorList>
    </citation>
    <scope>NUCLEOTIDE SEQUENCE [GENOMIC DNA] OF 1594-1682 (ISOFORMS 4/6/7)</scope>
    <scope>TISSUE SPECIFICITY</scope>
</reference>
<reference key="9">
    <citation type="submission" date="2003-01" db="EMBL/GenBank/DDBJ databases">
        <title>Molecular cloning of heat shock regulated-1 (XLHSRF-1).</title>
        <authorList>
            <person name="Liu Y."/>
            <person name="Xiao X."/>
            <person name="Zhang H."/>
            <person name="Yuan C."/>
        </authorList>
    </citation>
    <scope>NUCLEOTIDE SEQUENCE [MRNA] OF 2298-4265 (ISOFORM 6)</scope>
</reference>
<reference key="10">
    <citation type="journal article" date="2007" name="BMC Genomics">
        <title>The full-ORF clone resource of the German cDNA consortium.</title>
        <authorList>
            <person name="Bechtel S."/>
            <person name="Rosenfelder H."/>
            <person name="Duda A."/>
            <person name="Schmidt C.P."/>
            <person name="Ernst U."/>
            <person name="Wellenreuther R."/>
            <person name="Mehrle A."/>
            <person name="Schuster C."/>
            <person name="Bahr A."/>
            <person name="Bloecker H."/>
            <person name="Heubner D."/>
            <person name="Hoerlein A."/>
            <person name="Michel G."/>
            <person name="Wedler H."/>
            <person name="Koehrer K."/>
            <person name="Ottenwaelder B."/>
            <person name="Poustka A."/>
            <person name="Wiemann S."/>
            <person name="Schupp I."/>
        </authorList>
    </citation>
    <scope>NUCLEOTIDE SEQUENCE [LARGE SCALE MRNA] OF 3675-4265 (ISOFORM 4)</scope>
    <source>
        <tissue>Testis</tissue>
    </source>
</reference>
<reference key="11">
    <citation type="journal article" date="2014" name="Am. J. Hum. Genet.">
        <title>Mutations in DNAH1, which encodes an inner arm heavy chain dynein, lead to male infertility from multiple morphological abnormalities of the sperm flagella.</title>
        <authorList>
            <person name="Ben Khelifa M."/>
            <person name="Coutton C."/>
            <person name="Zouari R."/>
            <person name="Karaouzene T."/>
            <person name="Rendu J."/>
            <person name="Bidart M."/>
            <person name="Yassine S."/>
            <person name="Pierre V."/>
            <person name="Delaroche J."/>
            <person name="Hennebicq S."/>
            <person name="Grunwald D."/>
            <person name="Escalier D."/>
            <person name="Pernet-Gallay K."/>
            <person name="Jouk P.S."/>
            <person name="Thierry-Mieg N."/>
            <person name="Toure A."/>
            <person name="Arnoult C."/>
            <person name="Ray P.F."/>
        </authorList>
    </citation>
    <scope>FUNCTION</scope>
    <scope>SUBCELLULAR LOCATION</scope>
    <scope>TISSUE SPECIFICITY</scope>
    <scope>INVOLVEMENT IN SPGF18</scope>
    <scope>VARIANT SPGF18 ASN-1293</scope>
</reference>
<reference key="12">
    <citation type="journal article" date="2015" name="BMC Med. Genet.">
        <title>Variation in DNAH1 may contribute to primary ciliary dyskinesia.</title>
        <authorList>
            <person name="Imtiaz F."/>
            <person name="Allam R."/>
            <person name="Ramzan K."/>
            <person name="Al-Sayed M."/>
        </authorList>
    </citation>
    <scope>INVOLVEMENT IN CILD37</scope>
    <scope>VARIANT CILD37 GLN-1154</scope>
</reference>
<reference key="13">
    <citation type="journal article" date="2016" name="Hum. Reprod.">
        <title>Whole-exome sequencing of familial cases of multiple morphological abnormalities of the sperm flagella (MMAF) reveals new DNAH1 mutations.</title>
        <authorList>
            <person name="Amiri-Yekta A."/>
            <person name="Coutton C."/>
            <person name="Kherraf Z.E."/>
            <person name="Karaouzene T."/>
            <person name="Le Tanno P."/>
            <person name="Sanati M.H."/>
            <person name="Sabbaghian M."/>
            <person name="Almadani N."/>
            <person name="Sadighi Gilani M.A."/>
            <person name="Hosseini S.H."/>
            <person name="Bahrami S."/>
            <person name="Daneshipour A."/>
            <person name="Bini M."/>
            <person name="Arnoult C."/>
            <person name="Colombo R."/>
            <person name="Gourabi H."/>
            <person name="Ray P.F."/>
        </authorList>
    </citation>
    <scope>INVOLVEMENT IN SPGF18</scope>
    <scope>VARIANT SPGF18 GLY-1287</scope>
</reference>
<reference key="14">
    <citation type="journal article" date="2017" name="Am. J. Hum. Genet.">
        <title>Biallelic mutations in CFAP43 and CFAP44 cause male infertility with multiple morphological abnormalities of the sperm flagella.</title>
        <authorList>
            <person name="Tang S."/>
            <person name="Wang X."/>
            <person name="Li W."/>
            <person name="Yang X."/>
            <person name="Li Z."/>
            <person name="Liu W."/>
            <person name="Li C."/>
            <person name="Zhu Z."/>
            <person name="Wang L."/>
            <person name="Wang J."/>
            <person name="Zhang L."/>
            <person name="Sun X."/>
            <person name="Zhi E."/>
            <person name="Wang H."/>
            <person name="Li H."/>
            <person name="Jin L."/>
            <person name="Luo Y."/>
            <person name="Wang J."/>
            <person name="Yang S."/>
            <person name="Zhang F."/>
        </authorList>
    </citation>
    <scope>VARIANTS SPGF18 870-TRP--TYR-4265 DEL; 1036-TRP--TYR-4265 DEL; MET-1372; 1702-ARG--TYR-4265 DEL; 1955-TRP--TYR-4265 DEL; ARG-2071; MET-2150; 2466-ARG--TYR-4265 DEL; 2622-ARG--TYR-4265 DEL; CYS-3229; 3738-TRP--SER-4065 DEL; LEU-4096; CYS-4133 AND THR-4174</scope>
</reference>
<reference key="15">
    <citation type="journal article" date="2018" name="Nat. Commun.">
        <title>Mutations in CFAP43 and CFAP44 cause male infertility and flagellum defects in Trypanosoma and human.</title>
        <authorList>
            <person name="Coutton C."/>
            <person name="Vargas A.S."/>
            <person name="Amiri-Yekta A."/>
            <person name="Kherraf Z.E."/>
            <person name="Ben Mustapha S.F."/>
            <person name="Le Tanno P."/>
            <person name="Wambergue-Legrand C."/>
            <person name="Karaouzene T."/>
            <person name="Martinez G."/>
            <person name="Crouzy S."/>
            <person name="Daneshipour A."/>
            <person name="Hosseini S.H."/>
            <person name="Mitchell V."/>
            <person name="Halouani L."/>
            <person name="Marrakchi O."/>
            <person name="Makni M."/>
            <person name="Latrous H."/>
            <person name="Kharouf M."/>
            <person name="Deleuze J.F."/>
            <person name="Boland A."/>
            <person name="Hennebicq S."/>
            <person name="Satre V."/>
            <person name="Jouk P.S."/>
            <person name="Thierry-Mieg N."/>
            <person name="Conne B."/>
            <person name="Dacheux D."/>
            <person name="Landrein N."/>
            <person name="Schmitt A."/>
            <person name="Stouvenel L."/>
            <person name="Lores P."/>
            <person name="El Khouri E."/>
            <person name="Bottari S.P."/>
            <person name="Faure J."/>
            <person name="Wolf J.P."/>
            <person name="Pernet-Gallay K."/>
            <person name="Escoffier J."/>
            <person name="Gourabi H."/>
            <person name="Robinson D.R."/>
            <person name="Nef S."/>
            <person name="Dulioust E."/>
            <person name="Zouari R."/>
            <person name="Bonhivers M."/>
            <person name="Toure A."/>
            <person name="Arnoult C."/>
            <person name="Ray P.F."/>
        </authorList>
    </citation>
    <scope>VARIANT SPGF18 1582-PRO--GLY-1584 DEL</scope>
</reference>
<dbReference type="EMBL" id="AB037831">
    <property type="protein sequence ID" value="BAA92648.3"/>
    <property type="status" value="ALT_INIT"/>
    <property type="molecule type" value="mRNA"/>
</dbReference>
<dbReference type="EMBL" id="AK023766">
    <property type="protein sequence ID" value="BAB14671.1"/>
    <property type="status" value="ALT_SEQ"/>
    <property type="molecule type" value="mRNA"/>
</dbReference>
<dbReference type="EMBL" id="AK074130">
    <property type="protein sequence ID" value="BAB84956.2"/>
    <property type="status" value="ALT_INIT"/>
    <property type="molecule type" value="mRNA"/>
</dbReference>
<dbReference type="EMBL" id="AK125990">
    <property type="protein sequence ID" value="BAC86379.1"/>
    <property type="molecule type" value="mRNA"/>
</dbReference>
<dbReference type="EMBL" id="AB290163">
    <property type="protein sequence ID" value="BAG06717.1"/>
    <property type="status" value="ALT_FRAME"/>
    <property type="molecule type" value="mRNA"/>
</dbReference>
<dbReference type="EMBL" id="AC092045">
    <property type="status" value="NOT_ANNOTATED_CDS"/>
    <property type="molecule type" value="Genomic_DNA"/>
</dbReference>
<dbReference type="EMBL" id="KF459588">
    <property type="status" value="NOT_ANNOTATED_CDS"/>
    <property type="molecule type" value="Genomic_DNA"/>
</dbReference>
<dbReference type="EMBL" id="AJ132083">
    <property type="protein sequence ID" value="CAA10556.1"/>
    <property type="molecule type" value="mRNA"/>
</dbReference>
<dbReference type="EMBL" id="AJ132094">
    <property type="protein sequence ID" value="CAB46445.1"/>
    <property type="molecule type" value="Genomic_DNA"/>
</dbReference>
<dbReference type="EMBL" id="U61738">
    <property type="protein sequence ID" value="AAC50702.1"/>
    <property type="molecule type" value="mRNA"/>
</dbReference>
<dbReference type="EMBL" id="Z83804">
    <property type="protein sequence ID" value="CAB06058.1"/>
    <property type="status" value="ALT_SEQ"/>
    <property type="molecule type" value="mRNA"/>
</dbReference>
<dbReference type="EMBL" id="U83571">
    <property type="protein sequence ID" value="AAB82761.1"/>
    <property type="molecule type" value="Genomic_DNA"/>
</dbReference>
<dbReference type="EMBL" id="AY221994">
    <property type="protein sequence ID" value="AAO43053.1"/>
    <property type="status" value="ALT_FRAME"/>
    <property type="molecule type" value="mRNA"/>
</dbReference>
<dbReference type="EMBL" id="AL117428">
    <property type="protein sequence ID" value="CAB55917.1"/>
    <property type="molecule type" value="mRNA"/>
</dbReference>
<dbReference type="CCDS" id="CCDS46842.1">
    <molecule id="Q9P2D7-4"/>
</dbReference>
<dbReference type="PIR" id="T17227">
    <property type="entry name" value="T17227"/>
</dbReference>
<dbReference type="RefSeq" id="NP_056327.4">
    <molecule id="Q9P2D7-4"/>
    <property type="nucleotide sequence ID" value="NM_015512.4"/>
</dbReference>
<dbReference type="RefSeq" id="XP_016861619.1">
    <molecule id="Q9P2D7-4"/>
    <property type="nucleotide sequence ID" value="XM_017006130.2"/>
</dbReference>
<dbReference type="PDB" id="8I3J">
    <property type="method" value="X-ray"/>
    <property type="resolution" value="2.69 A"/>
    <property type="chains" value="A=2844-3120"/>
</dbReference>
<dbReference type="PDB" id="8J07">
    <property type="method" value="EM"/>
    <property type="resolution" value="4.10 A"/>
    <property type="chains" value="g6=1-4265"/>
</dbReference>
<dbReference type="PDBsum" id="8I3J"/>
<dbReference type="PDBsum" id="8J07"/>
<dbReference type="EMDB" id="EMD-35888"/>
<dbReference type="SMR" id="Q9P2D7"/>
<dbReference type="BioGRID" id="117465">
    <property type="interactions" value="17"/>
</dbReference>
<dbReference type="FunCoup" id="Q9P2D7">
    <property type="interactions" value="70"/>
</dbReference>
<dbReference type="IntAct" id="Q9P2D7">
    <property type="interactions" value="6"/>
</dbReference>
<dbReference type="MINT" id="Q9P2D7"/>
<dbReference type="STRING" id="9606.ENSP00000401514"/>
<dbReference type="GlyCosmos" id="Q9P2D7">
    <property type="glycosylation" value="2 sites, 2 glycans"/>
</dbReference>
<dbReference type="GlyGen" id="Q9P2D7">
    <property type="glycosylation" value="10 sites, 3 N-linked glycans (3 sites), 2 O-linked glycans (2 sites)"/>
</dbReference>
<dbReference type="iPTMnet" id="Q9P2D7"/>
<dbReference type="PhosphoSitePlus" id="Q9P2D7"/>
<dbReference type="SwissPalm" id="Q9P2D7"/>
<dbReference type="BioMuta" id="DNAH1"/>
<dbReference type="DMDM" id="327478598"/>
<dbReference type="jPOST" id="Q9P2D7"/>
<dbReference type="MassIVE" id="Q9P2D7"/>
<dbReference type="PaxDb" id="9606-ENSP00000401514"/>
<dbReference type="PeptideAtlas" id="Q9P2D7"/>
<dbReference type="ProteomicsDB" id="83784">
    <molecule id="Q9P2D7-3"/>
</dbReference>
<dbReference type="ProteomicsDB" id="83785">
    <molecule id="Q9P2D7-4"/>
</dbReference>
<dbReference type="Antibodypedia" id="48327">
    <property type="antibodies" value="44 antibodies from 12 providers"/>
</dbReference>
<dbReference type="DNASU" id="25981"/>
<dbReference type="Ensembl" id="ENST00000420323.7">
    <molecule id="Q9P2D7-4"/>
    <property type="protein sequence ID" value="ENSP00000401514.2"/>
    <property type="gene ID" value="ENSG00000114841.18"/>
</dbReference>
<dbReference type="GeneID" id="25981"/>
<dbReference type="KEGG" id="hsa:25981"/>
<dbReference type="MANE-Select" id="ENST00000420323.7">
    <property type="protein sequence ID" value="ENSP00000401514.2"/>
    <property type="RefSeq nucleotide sequence ID" value="NM_015512.5"/>
    <property type="RefSeq protein sequence ID" value="NP_056327.4"/>
</dbReference>
<dbReference type="UCSC" id="uc011bef.3">
    <molecule id="Q9P2D7-4"/>
    <property type="organism name" value="human"/>
</dbReference>
<dbReference type="AGR" id="HGNC:2940"/>
<dbReference type="CTD" id="25981"/>
<dbReference type="DisGeNET" id="25981"/>
<dbReference type="GeneCards" id="DNAH1"/>
<dbReference type="GeneReviews" id="DNAH1"/>
<dbReference type="HGNC" id="HGNC:2940">
    <property type="gene designation" value="DNAH1"/>
</dbReference>
<dbReference type="HPA" id="ENSG00000114841">
    <property type="expression patterns" value="Low tissue specificity"/>
</dbReference>
<dbReference type="MalaCards" id="DNAH1"/>
<dbReference type="MIM" id="603332">
    <property type="type" value="gene"/>
</dbReference>
<dbReference type="MIM" id="617576">
    <property type="type" value="phenotype"/>
</dbReference>
<dbReference type="MIM" id="617577">
    <property type="type" value="phenotype"/>
</dbReference>
<dbReference type="neXtProt" id="NX_Q9P2D7"/>
<dbReference type="OpenTargets" id="ENSG00000114841"/>
<dbReference type="Orphanet" id="276234">
    <property type="disease" value="Non-syndromic male infertility due to sperm motility disorder"/>
</dbReference>
<dbReference type="Orphanet" id="244">
    <property type="disease" value="Primary ciliary dyskinesia"/>
</dbReference>
<dbReference type="PharmGKB" id="PA27394"/>
<dbReference type="VEuPathDB" id="HostDB:ENSG00000114841"/>
<dbReference type="eggNOG" id="KOG3595">
    <property type="taxonomic scope" value="Eukaryota"/>
</dbReference>
<dbReference type="GeneTree" id="ENSGT00940000154791"/>
<dbReference type="HOGENOM" id="CLU_000038_0_0_1"/>
<dbReference type="InParanoid" id="Q9P2D7"/>
<dbReference type="OMA" id="HNVAKMV"/>
<dbReference type="OrthoDB" id="447173at2759"/>
<dbReference type="PAN-GO" id="Q9P2D7">
    <property type="GO annotations" value="5 GO annotations based on evolutionary models"/>
</dbReference>
<dbReference type="PhylomeDB" id="Q9P2D7"/>
<dbReference type="TreeFam" id="TF316836"/>
<dbReference type="PathwayCommons" id="Q9P2D7"/>
<dbReference type="SignaLink" id="Q9P2D7"/>
<dbReference type="BioGRID-ORCS" id="25981">
    <property type="hits" value="11 hits in 1149 CRISPR screens"/>
</dbReference>
<dbReference type="ChiTaRS" id="DNAH1">
    <property type="organism name" value="human"/>
</dbReference>
<dbReference type="GenomeRNAi" id="25981"/>
<dbReference type="Pharos" id="Q9P2D7">
    <property type="development level" value="Tbio"/>
</dbReference>
<dbReference type="PRO" id="PR:Q9P2D7"/>
<dbReference type="Proteomes" id="UP000005640">
    <property type="component" value="Chromosome 3"/>
</dbReference>
<dbReference type="RNAct" id="Q9P2D7">
    <property type="molecule type" value="protein"/>
</dbReference>
<dbReference type="Bgee" id="ENSG00000114841">
    <property type="expression patterns" value="Expressed in right uterine tube and 115 other cell types or tissues"/>
</dbReference>
<dbReference type="ExpressionAtlas" id="Q9P2D7">
    <property type="expression patterns" value="baseline and differential"/>
</dbReference>
<dbReference type="GO" id="GO:0005858">
    <property type="term" value="C:axonemal dynein complex"/>
    <property type="evidence" value="ECO:0000303"/>
    <property type="project" value="UniProtKB"/>
</dbReference>
<dbReference type="GO" id="GO:0005930">
    <property type="term" value="C:axoneme"/>
    <property type="evidence" value="ECO:0000315"/>
    <property type="project" value="UniProtKB"/>
</dbReference>
<dbReference type="GO" id="GO:0030286">
    <property type="term" value="C:dynein complex"/>
    <property type="evidence" value="ECO:0000318"/>
    <property type="project" value="GO_Central"/>
</dbReference>
<dbReference type="GO" id="GO:0005576">
    <property type="term" value="C:extracellular region"/>
    <property type="evidence" value="ECO:0007669"/>
    <property type="project" value="GOC"/>
</dbReference>
<dbReference type="GO" id="GO:0036156">
    <property type="term" value="C:inner dynein arm"/>
    <property type="evidence" value="ECO:0000314"/>
    <property type="project" value="SYSCILIA_CCNET"/>
</dbReference>
<dbReference type="GO" id="GO:0005874">
    <property type="term" value="C:microtubule"/>
    <property type="evidence" value="ECO:0007669"/>
    <property type="project" value="UniProtKB-KW"/>
</dbReference>
<dbReference type="GO" id="GO:0036126">
    <property type="term" value="C:sperm flagellum"/>
    <property type="evidence" value="ECO:0000314"/>
    <property type="project" value="SYSCILIA_CCNET"/>
</dbReference>
<dbReference type="GO" id="GO:0005524">
    <property type="term" value="F:ATP binding"/>
    <property type="evidence" value="ECO:0007669"/>
    <property type="project" value="UniProtKB-KW"/>
</dbReference>
<dbReference type="GO" id="GO:0045505">
    <property type="term" value="F:dynein intermediate chain binding"/>
    <property type="evidence" value="ECO:0000318"/>
    <property type="project" value="GO_Central"/>
</dbReference>
<dbReference type="GO" id="GO:0051959">
    <property type="term" value="F:dynein light intermediate chain binding"/>
    <property type="evidence" value="ECO:0000318"/>
    <property type="project" value="GO_Central"/>
</dbReference>
<dbReference type="GO" id="GO:0003777">
    <property type="term" value="F:microtubule motor activity"/>
    <property type="evidence" value="ECO:0000303"/>
    <property type="project" value="UniProtKB"/>
</dbReference>
<dbReference type="GO" id="GO:0008569">
    <property type="term" value="F:minus-end-directed microtubule motor activity"/>
    <property type="evidence" value="ECO:0000318"/>
    <property type="project" value="GO_Central"/>
</dbReference>
<dbReference type="GO" id="GO:0060285">
    <property type="term" value="P:cilium-dependent cell motility"/>
    <property type="evidence" value="ECO:0000303"/>
    <property type="project" value="UniProtKB"/>
</dbReference>
<dbReference type="GO" id="GO:0003351">
    <property type="term" value="P:epithelial cilium movement involved in extracellular fluid movement"/>
    <property type="evidence" value="ECO:0007669"/>
    <property type="project" value="Ensembl"/>
</dbReference>
<dbReference type="GO" id="GO:0030317">
    <property type="term" value="P:flagellated sperm motility"/>
    <property type="evidence" value="ECO:0000315"/>
    <property type="project" value="UniProtKB"/>
</dbReference>
<dbReference type="GO" id="GO:0036159">
    <property type="term" value="P:inner dynein arm assembly"/>
    <property type="evidence" value="ECO:0000314"/>
    <property type="project" value="SYSCILIA_CCNET"/>
</dbReference>
<dbReference type="GO" id="GO:0007288">
    <property type="term" value="P:sperm axoneme assembly"/>
    <property type="evidence" value="ECO:0000315"/>
    <property type="project" value="UniProtKB"/>
</dbReference>
<dbReference type="CDD" id="cd00009">
    <property type="entry name" value="AAA"/>
    <property type="match status" value="1"/>
</dbReference>
<dbReference type="FunFam" id="1.10.472.130:FF:000006">
    <property type="entry name" value="Dynein axonemal heavy chain 1"/>
    <property type="match status" value="1"/>
</dbReference>
<dbReference type="FunFam" id="1.10.8.1220:FF:000001">
    <property type="entry name" value="Dynein axonemal heavy chain 5"/>
    <property type="match status" value="1"/>
</dbReference>
<dbReference type="FunFam" id="1.10.8.710:FF:000004">
    <property type="entry name" value="Dynein axonemal heavy chain 6"/>
    <property type="match status" value="1"/>
</dbReference>
<dbReference type="FunFam" id="1.20.140.100:FF:000004">
    <property type="entry name" value="Dynein axonemal heavy chain 6"/>
    <property type="match status" value="1"/>
</dbReference>
<dbReference type="FunFam" id="3.40.50.300:FF:002141">
    <property type="entry name" value="Dynein heavy chain"/>
    <property type="match status" value="1"/>
</dbReference>
<dbReference type="FunFam" id="1.10.287.2620:FF:000005">
    <property type="entry name" value="Dynein heavy chain 1, axonemal"/>
    <property type="match status" value="1"/>
</dbReference>
<dbReference type="FunFam" id="3.20.180.20:FF:000003">
    <property type="entry name" value="Dynein heavy chain 12, axonemal"/>
    <property type="match status" value="1"/>
</dbReference>
<dbReference type="FunFam" id="3.40.50.300:FF:000223">
    <property type="entry name" value="Dynein heavy chain 3, axonemal"/>
    <property type="match status" value="1"/>
</dbReference>
<dbReference type="FunFam" id="3.40.50.300:FF:000044">
    <property type="entry name" value="Dynein heavy chain 5, axonemal"/>
    <property type="match status" value="1"/>
</dbReference>
<dbReference type="FunFam" id="3.40.50.300:FF:001328">
    <property type="entry name" value="Dynein heavy chain 6, axonemal"/>
    <property type="match status" value="1"/>
</dbReference>
<dbReference type="FunFam" id="1.10.8.720:FF:000001">
    <property type="entry name" value="dynein heavy chain 7, axonemal"/>
    <property type="match status" value="1"/>
</dbReference>
<dbReference type="FunFam" id="1.20.1270.280:FF:000001">
    <property type="entry name" value="dynein heavy chain 7, axonemal"/>
    <property type="match status" value="1"/>
</dbReference>
<dbReference type="FunFam" id="3.10.490.20:FF:000001">
    <property type="entry name" value="dynein heavy chain 7, axonemal"/>
    <property type="match status" value="1"/>
</dbReference>
<dbReference type="FunFam" id="1.20.58.1120:FF:000005">
    <property type="entry name" value="Dynein, axonemal, heavy chain 12"/>
    <property type="match status" value="1"/>
</dbReference>
<dbReference type="FunFam" id="1.20.920.30:FF:000005">
    <property type="entry name" value="Dynein, axonemal, heavy chain 2"/>
    <property type="match status" value="1"/>
</dbReference>
<dbReference type="FunFam" id="1.20.920.20:FF:000006">
    <property type="entry name" value="Dynein, axonemal, heavy chain 6"/>
    <property type="match status" value="1"/>
</dbReference>
<dbReference type="FunFam" id="3.40.50.300:FF:000362">
    <property type="entry name" value="Dynein, axonemal, heavy chain 6"/>
    <property type="match status" value="1"/>
</dbReference>
<dbReference type="Gene3D" id="1.10.287.2620">
    <property type="match status" value="1"/>
</dbReference>
<dbReference type="Gene3D" id="1.10.472.130">
    <property type="match status" value="1"/>
</dbReference>
<dbReference type="Gene3D" id="1.10.8.1220">
    <property type="match status" value="1"/>
</dbReference>
<dbReference type="Gene3D" id="1.10.8.710">
    <property type="match status" value="1"/>
</dbReference>
<dbReference type="Gene3D" id="1.20.1270.280">
    <property type="match status" value="1"/>
</dbReference>
<dbReference type="Gene3D" id="1.20.58.1120">
    <property type="match status" value="1"/>
</dbReference>
<dbReference type="Gene3D" id="1.20.920.20">
    <property type="match status" value="1"/>
</dbReference>
<dbReference type="Gene3D" id="1.20.920.30">
    <property type="match status" value="1"/>
</dbReference>
<dbReference type="Gene3D" id="3.10.490.20">
    <property type="match status" value="1"/>
</dbReference>
<dbReference type="Gene3D" id="6.10.140.1060">
    <property type="match status" value="1"/>
</dbReference>
<dbReference type="Gene3D" id="1.20.140.100">
    <property type="entry name" value="Dynein heavy chain, N-terminal domain 2"/>
    <property type="match status" value="1"/>
</dbReference>
<dbReference type="Gene3D" id="3.20.180.20">
    <property type="entry name" value="Dynein heavy chain, N-terminal domain 2"/>
    <property type="match status" value="1"/>
</dbReference>
<dbReference type="Gene3D" id="3.40.50.300">
    <property type="entry name" value="P-loop containing nucleotide triphosphate hydrolases"/>
    <property type="match status" value="5"/>
</dbReference>
<dbReference type="Gene3D" id="1.10.8.720">
    <property type="entry name" value="Region D6 of dynein motor"/>
    <property type="match status" value="1"/>
</dbReference>
<dbReference type="InterPro" id="IPR035699">
    <property type="entry name" value="AAA_6"/>
</dbReference>
<dbReference type="InterPro" id="IPR035706">
    <property type="entry name" value="AAA_9"/>
</dbReference>
<dbReference type="InterPro" id="IPR041658">
    <property type="entry name" value="AAA_lid_11"/>
</dbReference>
<dbReference type="InterPro" id="IPR042219">
    <property type="entry name" value="AAA_lid_11_sf"/>
</dbReference>
<dbReference type="InterPro" id="IPR026983">
    <property type="entry name" value="DHC"/>
</dbReference>
<dbReference type="InterPro" id="IPR041589">
    <property type="entry name" value="DNAH3_AAA_lid_1"/>
</dbReference>
<dbReference type="InterPro" id="IPR042222">
    <property type="entry name" value="Dynein_2_N"/>
</dbReference>
<dbReference type="InterPro" id="IPR043157">
    <property type="entry name" value="Dynein_AAA1S"/>
</dbReference>
<dbReference type="InterPro" id="IPR041466">
    <property type="entry name" value="Dynein_AAA5_ext"/>
</dbReference>
<dbReference type="InterPro" id="IPR041228">
    <property type="entry name" value="Dynein_C"/>
</dbReference>
<dbReference type="InterPro" id="IPR043160">
    <property type="entry name" value="Dynein_C_barrel"/>
</dbReference>
<dbReference type="InterPro" id="IPR024743">
    <property type="entry name" value="Dynein_HC_stalk"/>
</dbReference>
<dbReference type="InterPro" id="IPR024317">
    <property type="entry name" value="Dynein_heavy_chain_D4_dom"/>
</dbReference>
<dbReference type="InterPro" id="IPR004273">
    <property type="entry name" value="Dynein_heavy_D6_P-loop"/>
</dbReference>
<dbReference type="InterPro" id="IPR013602">
    <property type="entry name" value="Dynein_heavy_linker"/>
</dbReference>
<dbReference type="InterPro" id="IPR042228">
    <property type="entry name" value="Dynein_linker_3"/>
</dbReference>
<dbReference type="InterPro" id="IPR027417">
    <property type="entry name" value="P-loop_NTPase"/>
</dbReference>
<dbReference type="PANTHER" id="PTHR22878:SF73">
    <property type="entry name" value="DYNEIN AXONEMAL HEAVY CHAIN 1"/>
    <property type="match status" value="1"/>
</dbReference>
<dbReference type="PANTHER" id="PTHR22878">
    <property type="entry name" value="DYNEIN HEAVY CHAIN 6, AXONEMAL-LIKE-RELATED"/>
    <property type="match status" value="1"/>
</dbReference>
<dbReference type="Pfam" id="PF12774">
    <property type="entry name" value="AAA_6"/>
    <property type="match status" value="1"/>
</dbReference>
<dbReference type="Pfam" id="PF12775">
    <property type="entry name" value="AAA_7"/>
    <property type="match status" value="1"/>
</dbReference>
<dbReference type="Pfam" id="PF12780">
    <property type="entry name" value="AAA_8"/>
    <property type="match status" value="1"/>
</dbReference>
<dbReference type="Pfam" id="PF12781">
    <property type="entry name" value="AAA_9"/>
    <property type="match status" value="1"/>
</dbReference>
<dbReference type="Pfam" id="PF17857">
    <property type="entry name" value="AAA_lid_1"/>
    <property type="match status" value="1"/>
</dbReference>
<dbReference type="Pfam" id="PF18198">
    <property type="entry name" value="AAA_lid_11"/>
    <property type="match status" value="1"/>
</dbReference>
<dbReference type="Pfam" id="PF08393">
    <property type="entry name" value="DHC_N2"/>
    <property type="match status" value="1"/>
</dbReference>
<dbReference type="Pfam" id="PF17852">
    <property type="entry name" value="Dynein_AAA_lid"/>
    <property type="match status" value="1"/>
</dbReference>
<dbReference type="Pfam" id="PF18199">
    <property type="entry name" value="Dynein_C"/>
    <property type="match status" value="1"/>
</dbReference>
<dbReference type="Pfam" id="PF03028">
    <property type="entry name" value="Dynein_heavy"/>
    <property type="match status" value="1"/>
</dbReference>
<dbReference type="Pfam" id="PF12777">
    <property type="entry name" value="MT"/>
    <property type="match status" value="1"/>
</dbReference>
<dbReference type="SUPFAM" id="SSF52540">
    <property type="entry name" value="P-loop containing nucleoside triphosphate hydrolases"/>
    <property type="match status" value="4"/>
</dbReference>
<sequence length="4265" mass="487498">MEQPNSKGYSLGRTPQGPECSSAPAVQVGTHRGLEYNPGKILPGSDYGLGNPPALDPKLPHLPLPPAPPTLSDLGQPRKSPLTGTDKKYPLMKQRGFYSDILSPGTLDQLGEVCRGPRMSQNLLRQADLDKFTPRVGSFEVPEDFQERMEQQCIGSTTRLLAQTDFPLQAYEPKMQVPFQVLPGQHPRKIEIERRKQQYLSLDIEQLLFSQGIDSNKLMPRHLDHQHPQTIEQGHDPIFPIYLPLKVFDNEDFDCRTPREWINMGLEPGSLDRKPVPGKALLPTDDFLGHEDPKSQKLKYKWCEVGVLDYDEEKKLYLVHKTDEKGLVRDEMGRPILNAGVTTEGRPPLQVCQYWVPRIQLLFCAEDPCMFAQRVVQANALRKNTEALLLYNLYVDCMPSDGQHVISEQSLSKIKQWALSTPRMRKGPSVLEHLSSLAREVSLDYERSMNKINFDHVVSSKPETFSYVTLPKKEEEQVPERGLVSVPKYHFWEQKEDFTFVSLLTRPEVITALSKVRAECNKVTAMSLFHSSLSKYSHLEEFEQIQSQTFSQVQMFLKDSWISSLKVAMRSSLRDMSKGWYNLYETNWEVYLMSKLRKLMELVKYMLQDTLRFLVQDSLASFSQFISDTCCSVLNCTDDMVWGDDLINSPYRPRKNPLFIMDLVLDSSGVHYSTPLEQFEASLLNLFDKGILATHAVPQLEKLVMEDIFISGDPLLESVGLHEPLVEELRATIASAVSKAMIPLQAYAKEYRKYLELNNNDIASFLKTYQTQGLLAQEVREVVLTHLREKEILDSSLPSSIIIGPFYINTDNVKQSLSKKRKALATSVLDILAKNLHKEVDSICEEFRSISRKIYEKPNSIEELAELREWMKGIPERLVGLEERIVKVMDDYQVMDEFLYNLSSDDFNDKWIASNWPSKILGQIELVQQQHVEDEEKFRKIQIMDQNNFQEKLEGLQLVVAGFSIHVEISRAHEIANEVRRVKKQLKDCQQLAMLYNNRERIFSLPITNYDKLSRMVKEFQPYLDLWTTASDWLRWSESWMNDPLSAIDAEQLEKNVVEAFKTMHKCVKQFKDMPACQEVALDIRARIEEFKPYIPLIQGLRNPGMRIRHWETLSNQININVRPKANLTFARCLEMNLQDHIESISKVAEVAGKEYAIEQALDKMEKEWSTILFNVLPYKATDTYILKSPDEASQLLDDHIVMTQNMSFSPYKKPFEQRINSWENKLKLTQEVLEEWLNCQRSWLYLEPIFSSEDINQQLPVESKRYQTMERIWKKIMKNAYENREVINVCSDLRMLDSLRDCNKILDLVQKGLSEYLETKRSAFPRFYFLSDDELLEILSQTKDPTAVQPHLRKCFENIARLLFQEDLEITHMYSAEGEEVQLCFSIYPSSNVEDWLREVERSMKASVHDIIEKAIRAYPTMPRTQWVLNWPGQVTIAGCQTYWTMEVAEALEAGNLRSQLFPQLCQQLSDLVALVRGKLSRMQRAVLSALIVIEVHAKDVVSKLIQENVVSVNDFQWISQLRYYWTNNDLYIRAVNAEFIYGYEYLGNSGRLVITPLTDRCYLTLTGALHLKFGGAPAGPAGTGKTETTKDLGKALAIQTVVFNCSDQLDFMAMGKFFKGLASAGAWACFDEFNRIDIEVLSVVAQQITTIQKAQQQRVERFMFEGVEIPLVPSCAVFITMNPGYAGRTELPDNLKALFRPVAMMVPDYAMITEISLYSFGFNEASVLAKKITTTFKLSSEQLSSQDHYDFGMRAVKTVISAAGNLKRENPSMNEELICLRAIRDVNVPKFLQEDLKLFSGIVSDLFPTIKEEDTDYGILDEAIREACRNSNLKDVEGFLTKCIQLYETTVVRHGLMLVGPTGSGKSTCYRVLAAAMTSLKGQPSISGGMYEAVNYYVLNPKSITMGQLYGEFDLLTHEWTDGIFSSFIRAGAITSDTNKKWYMFDGPVDAIWIENMNTVLDDNKKLCLSSGEIIKLTEAMTMMFEVQDLAVASPATVSRCGMVYLEPSILGLMPFIECWLRKLPPLLKPYEEHFKALFVSFLEESISFVRSSVKEVIASTNCNLTMSLLKLLDCFFKPFLPREGLKKIPSEKLSRIVELIEPWFIFSLIWSVGATGDSSGRTSFSHWLRLKMENEQLTLLFPEEGLVFDYRLEDAGISGTNDSEDEEEEYKQVAWVKWMDSSAPFTMVPDTNYCNIIVPTMDTVQMSHLLDMLLTNKKPVLCIGPTGTGKTLTISDKLLKNLALDYISHFLTFSARTSANQTQDFIDSKLDKRRKGVFGPPLGRNFIFFIDDLNMPALETYGAQPPIELLRQWMDHGGWYDRKIIGAFKNLVDINFVCAMGPPGGGRNTVTPRLMRHFNYLSFAEMDEVSKKRIFSTILGNWLDGLLGEKSYRERVPGAPHIAHFTEPLVEATIMVYATITSQLLPTPAKSHYTFNLRDLSKVFQGMLMADPAKVEDQVQLLRLWYHENCRVFRDRLVNEEDRSWFDQLLKRCMEQWEVTFNKVCPFQPILYGDFMSPGSDVKSYELITSESKMMQVIEEYIEDYNQINTAKLKLVLFMDAMSHICRISRTLRQALGNALLLGVGGSGRSSLTRLASHMAEYECFQIELSKNYGMSEWRDDVKKVLLKAGLQNLPITFLFSDTQIKNESFLEDINNVLNSGDIPNLYTADEQDQIVSTMRPYIQEQGLQPTKANLMAAYTGRVRSNIHMVLCMSPIGEVFRARLRQFPSLVNCCTIDWFNEWPAEALKSVATVFLNEIPELESSQEEIQGLIQVCVYIHQSVSKKCIEYLAELTRHNYVTPKSYLELLHIFSILIGQKKLELKTAKNRMKSGLDKLLRTSEDVAKMQEDLESMHPLLEEAAKDTMLTMEQIKVDTAIAEETRNSVQTEEIKANEKAKKAQAIADDAQKDLDEALPALDAALASLRNLNKNDVTEVRAMQRPPPGVKLVIEAVCIMKGIKPKKVPGEKPGTKVDDYWEPGKGLLQDPGHFLESLFKFDKDNIGDVVIKAIQPYIDNEEFQPATIAKVSKACTSICQWVRAMHKYHFVAKAVEPKRQALLEAQDDLGVTQRILDEAKQRLREVEDGIATMQAKYRECITKKEELELKCEQCEQRLGRAGKLINGLSDEKVRWQETVENLQYMLNNISGDVLVAAGFVAYLGPFTGQYRTVLYDSWVKQLRSHNVPHTSEPTLIGTLGNPVKIRSWQIAGLPNDTLSVENGVINQFSQRWTHFIDPQSQANKWIKNMEKDNGLDVFKLSDRDFLRSMENAIRFGKPCLLENVGEELDPALEPVLLKQTYKQQGNTVLKLGDTVIPYHEDFRMYITTKLPNPHYTPEISTKLTLINFTLSPSGLEDQLLGQVVAEERPDLEEAKNQLIISNAKMRQELKDIEDQILYRLSSSEGNPVDDMELIKVLEASKMKAAEIQAKVRIAEQTEKDIDLTRMEYIPVAIRTQILFFCVSDLANVDPMYQYSLEWFLNIFLSGIANSERADNLKKRISNINRYLTYSLYSNVCRSLFEKHKLMFAFLLCVRIMMNEGKINQSEWRYLLSGGSISIMTENPAPDWLSDRAWRDILALSNLPTFSSFSSDFVKHLSEFRVIFDSLEPHREPLPGIWDQYLDQFQKLLVLRCLRGDKVTNAMQDFVATNLEPRFIEPQTANLSVVFKDSNSTTPLIFVLSPGTDPAADLYKFAEEMKFSKKLSAISLGQGQGPRAEAMMRSSIERGKWVFFQNCHLAPSWMPALERLIEHINPDKVHRDFRLWLTSLPSNKFPVSILQNGSKMTIEPPRGVRANLLKSYSSLGEDFLNSCHKVMEFKSLLLSLCLFHGNALERRKFGPLGFNIPYEFTDGDLRICISQLKMFLDEYDDIPYKVLKYTAGEINYGGRVTDDWDRRCIMNILEDFYNPDVLSPEHSYSASGIYHQIPPTYDLHGYLSYIKSLPLNDMPEIFGLHDNANITFAQNETFALLGTIIQLQPKSSSAGSQGREEIVEDVTQNILLKVPEPINLQWVMAKYPVLYEESMNTVLVQEVIRYNRLLQVITQTLQDLLKALKGLVVMSSQLELMAASLYNNTVPELWSAKAYPSLKPLSSWVMDLLQRLDFLQAWIQDGIPAVFWISGFFFPQAFLTGTLQNFARKFVISIDTISFDFKVMFEAPSELTQRPQVGCYIHGLFLEGARWDPEAFQLAESQPKELYTEMAVIWLLPTPNRKAQDQDFYLCPIYKTLTRAGTLSTTGHSTNYVIAVEIPTHQPQRHWIKRGVALICALDY</sequence>
<name>DYH1_HUMAN</name>
<keyword id="KW-0002">3D-structure</keyword>
<keyword id="KW-0025">Alternative splicing</keyword>
<keyword id="KW-0067">ATP-binding</keyword>
<keyword id="KW-0966">Cell projection</keyword>
<keyword id="KW-1186">Ciliopathy</keyword>
<keyword id="KW-0969">Cilium</keyword>
<keyword id="KW-0175">Coiled coil</keyword>
<keyword id="KW-0963">Cytoplasm</keyword>
<keyword id="KW-0206">Cytoskeleton</keyword>
<keyword id="KW-0225">Disease variant</keyword>
<keyword id="KW-0243">Dynein</keyword>
<keyword id="KW-0282">Flagellum</keyword>
<keyword id="KW-1012">Kartagener syndrome</keyword>
<keyword id="KW-0493">Microtubule</keyword>
<keyword id="KW-0505">Motor protein</keyword>
<keyword id="KW-0547">Nucleotide-binding</keyword>
<keyword id="KW-0990">Primary ciliary dyskinesia</keyword>
<keyword id="KW-1267">Proteomics identification</keyword>
<keyword id="KW-1185">Reference proteome</keyword>
<organism>
    <name type="scientific">Homo sapiens</name>
    <name type="common">Human</name>
    <dbReference type="NCBI Taxonomy" id="9606"/>
    <lineage>
        <taxon>Eukaryota</taxon>
        <taxon>Metazoa</taxon>
        <taxon>Chordata</taxon>
        <taxon>Craniata</taxon>
        <taxon>Vertebrata</taxon>
        <taxon>Euteleostomi</taxon>
        <taxon>Mammalia</taxon>
        <taxon>Eutheria</taxon>
        <taxon>Euarchontoglires</taxon>
        <taxon>Primates</taxon>
        <taxon>Haplorrhini</taxon>
        <taxon>Catarrhini</taxon>
        <taxon>Hominidae</taxon>
        <taxon>Homo</taxon>
    </lineage>
</organism>
<comment type="function">
    <text evidence="4 8">Force generating protein of cilia required for sperm flagellum motility. Produces force towards the minus ends of microtubules. Dynein has ATPase activity; the force-producing power stroke is thought to occur on release of ADP. Required in spermatozoa for the formation of the inner dynein arms and biogenesis of the axoneme (PubMed:24360805).</text>
</comment>
<comment type="subunit">
    <text evidence="3">Consists of at least two heavy chains and a number of intermediate and light chains.</text>
</comment>
<comment type="subcellular location">
    <subcellularLocation>
        <location evidence="8">Cytoplasm</location>
        <location evidence="8">Cytoskeleton</location>
        <location evidence="8">Cilium axoneme</location>
    </subcellularLocation>
    <subcellularLocation>
        <location evidence="2">Cell projection</location>
        <location evidence="2">Cilium</location>
        <location evidence="2">Flagellum</location>
    </subcellularLocation>
</comment>
<comment type="alternative products">
    <event type="alternative splicing"/>
    <isoform>
        <id>Q9P2D7-4</id>
        <name>4</name>
        <sequence type="displayed"/>
    </isoform>
    <isoform>
        <id>Q9P2D7-3</id>
        <name>3</name>
        <sequence type="described" ref="VSP_031305 VSP_031306"/>
    </isoform>
    <isoform>
        <id>Q9P2D7-6</id>
        <name>6</name>
        <sequence type="described" ref="VSP_059797 VSP_059798"/>
    </isoform>
    <isoform>
        <id>Q9P2D7-8</id>
        <name>7</name>
        <sequence type="described" ref="VSP_059799 VSP_059800"/>
    </isoform>
</comment>
<comment type="tissue specificity">
    <text evidence="7 8 13">Expressed primarily in trachea and testis, 2 tissues containing axonemal structures. Also expressed in brain (PubMed:11175280).</text>
</comment>
<comment type="domain">
    <text evidence="1">Dynein heavy chains probably consist of an N-terminal stem (which binds cargo and interacts with other dynein components), and the head or motor domain. The motor contains six tandemly-linked AAA domains in the head, which form a ring. A stalk-like structure (formed by two of the coiled coil domains) protrudes between AAA 4 and AAA 5 and terminates in a microtubule-binding site. A seventh domain may also contribute to this ring; it is not clear whether the N-terminus or the C-terminus forms this extra domain. There are four well-conserved and two non-conserved ATPase sites, one per AAA domain. Probably only one of these (within AAA 1) actually hydrolyzes ATP, the others may serve a regulatory function (By similarity).</text>
</comment>
<comment type="disease" evidence="8 10 11 12">
    <disease id="DI-05027">
        <name>Spermatogenic failure 18</name>
        <acronym>SPGF18</acronym>
        <description>An infertility disorder caused by spermatogenesis defects and characterized by abnormally shaped spermatozoa in the semen of affected individuals. SPGF18 patients present with primary infertility and multiple morphological abnormalities of sperm flagella that result in impaired sperm mobility. Abnormalities include absent, short, coiled, bent, and irregular flagella. SPGF18 inheritance is autosomal recessive.</description>
        <dbReference type="MIM" id="617576"/>
    </disease>
    <text>The disease is caused by variants affecting the gene represented in this entry.</text>
</comment>
<comment type="disease" evidence="9">
    <disease id="DI-05029">
        <name>Ciliary dyskinesia, primary, 37</name>
        <acronym>CILD37</acronym>
        <description>A form of primary ciliary dyskinesia, a disorder characterized by abnormalities of motile cilia. Respiratory infections leading to chronic inflammation and bronchiectasis are recurrent, due to defects in the respiratory cilia. Some patients exhibit randomization of left-right body asymmetry and situs inversus. Primary ciliary dyskinesia associated with situs inversus is referred to as Kartagener syndrome. CILD37 inheritance is autosomal recessive.</description>
        <dbReference type="MIM" id="617577"/>
    </disease>
    <text>The disease is caused by variants affecting the gene represented in this entry.</text>
</comment>
<comment type="similarity">
    <text evidence="15">Belongs to the dynein heavy chain family.</text>
</comment>
<comment type="sequence caution" evidence="15">
    <conflict type="frameshift">
        <sequence resource="EMBL-CDS" id="AAO43053"/>
    </conflict>
</comment>
<comment type="sequence caution" evidence="15">
    <conflict type="erroneous initiation">
        <sequence resource="EMBL-CDS" id="BAA92648"/>
    </conflict>
    <text>Extended N-terminus.</text>
</comment>
<comment type="sequence caution" evidence="15">
    <conflict type="erroneous initiation">
        <sequence resource="EMBL-CDS" id="BAB14671"/>
    </conflict>
    <text>Truncated N-terminus.</text>
</comment>
<comment type="sequence caution" evidence="15">
    <conflict type="frameshift">
        <sequence resource="EMBL-CDS" id="BAB14671"/>
    </conflict>
</comment>
<comment type="sequence caution" evidence="15">
    <conflict type="erroneous initiation">
        <sequence resource="EMBL-CDS" id="BAB84956"/>
    </conflict>
    <text>Extended N-terminus.</text>
</comment>
<comment type="sequence caution" evidence="15">
    <conflict type="frameshift">
        <sequence resource="EMBL-CDS" id="BAG06717"/>
    </conflict>
</comment>
<comment type="sequence caution" evidence="15">
    <conflict type="erroneous initiation">
        <sequence resource="EMBL-CDS" id="CAB06058"/>
    </conflict>
    <text>Extended N-terminus.</text>
</comment>
<comment type="sequence caution" evidence="15">
    <conflict type="frameshift">
        <sequence resource="EMBL-CDS" id="CAB06058"/>
    </conflict>
</comment>
<comment type="sequence caution" evidence="15">
    <molecule>Isoform 6</molecule>
    <conflict type="frameshift">
        <sequence resource="EMBL-CDS" id="BAG06717"/>
    </conflict>
</comment>
<protein>
    <recommendedName>
        <fullName evidence="15">Dynein axonemal heavy chain 1</fullName>
    </recommendedName>
    <alternativeName>
        <fullName>Axonemal beta dynein heavy chain 1</fullName>
    </alternativeName>
    <alternativeName>
        <fullName>Ciliary dynein heavy chain 1</fullName>
    </alternativeName>
    <alternativeName>
        <fullName>Heat shock regulated protein 1</fullName>
        <shortName>HSRF-1</shortName>
    </alternativeName>
    <alternativeName>
        <fullName>hDHC7</fullName>
    </alternativeName>
</protein>